<dbReference type="EC" id="3.6.4.-" evidence="2"/>
<dbReference type="EMBL" id="X67119">
    <property type="protein sequence ID" value="CAA47594.1"/>
    <property type="molecule type" value="Genomic_DNA"/>
</dbReference>
<dbReference type="EMBL" id="X69198">
    <property type="protein sequence ID" value="CAA49036.1"/>
    <property type="molecule type" value="Genomic_DNA"/>
</dbReference>
<dbReference type="PIR" id="B36847">
    <property type="entry name" value="B36847"/>
</dbReference>
<dbReference type="RefSeq" id="NP_042139.1">
    <property type="nucleotide sequence ID" value="NC_001611.1"/>
</dbReference>
<dbReference type="SMR" id="P0DST7"/>
<dbReference type="GeneID" id="1486421"/>
<dbReference type="KEGG" id="vg:1486421"/>
<dbReference type="Proteomes" id="UP000002060">
    <property type="component" value="Segment"/>
</dbReference>
<dbReference type="GO" id="GO:0030430">
    <property type="term" value="C:host cell cytoplasm"/>
    <property type="evidence" value="ECO:0007669"/>
    <property type="project" value="UniProtKB-SubCell"/>
</dbReference>
<dbReference type="GO" id="GO:0005524">
    <property type="term" value="F:ATP binding"/>
    <property type="evidence" value="ECO:0007669"/>
    <property type="project" value="UniProtKB-KW"/>
</dbReference>
<dbReference type="GO" id="GO:0004386">
    <property type="term" value="F:helicase activity"/>
    <property type="evidence" value="ECO:0007669"/>
    <property type="project" value="UniProtKB-KW"/>
</dbReference>
<dbReference type="GO" id="GO:0016787">
    <property type="term" value="F:hydrolase activity"/>
    <property type="evidence" value="ECO:0007669"/>
    <property type="project" value="UniProtKB-KW"/>
</dbReference>
<dbReference type="InterPro" id="IPR004968">
    <property type="entry name" value="DNA_primase/NTPase_C"/>
</dbReference>
<dbReference type="InterPro" id="IPR014015">
    <property type="entry name" value="Helicase_SF3_DNA-vir"/>
</dbReference>
<dbReference type="InterPro" id="IPR014818">
    <property type="entry name" value="Phage/plasmid_primase_P4_C"/>
</dbReference>
<dbReference type="InterPro" id="IPR051620">
    <property type="entry name" value="Viral_Helicase-Primase_Cplx"/>
</dbReference>
<dbReference type="PANTHER" id="PTHR35372">
    <property type="entry name" value="ATP BINDING PROTEIN-RELATED"/>
    <property type="match status" value="1"/>
</dbReference>
<dbReference type="PANTHER" id="PTHR35372:SF2">
    <property type="entry name" value="SF3 HELICASE DOMAIN-CONTAINING PROTEIN"/>
    <property type="match status" value="1"/>
</dbReference>
<dbReference type="Pfam" id="PF08706">
    <property type="entry name" value="D5_N"/>
    <property type="match status" value="1"/>
</dbReference>
<dbReference type="Pfam" id="PF03288">
    <property type="entry name" value="Pox_D5"/>
    <property type="match status" value="1"/>
</dbReference>
<dbReference type="PROSITE" id="PS51206">
    <property type="entry name" value="SF3_HELICASE_1"/>
    <property type="match status" value="1"/>
</dbReference>
<keyword id="KW-0067">ATP-binding</keyword>
<keyword id="KW-0347">Helicase</keyword>
<keyword id="KW-1035">Host cytoplasm</keyword>
<keyword id="KW-0378">Hydrolase</keyword>
<keyword id="KW-0547">Nucleotide-binding</keyword>
<keyword id="KW-1185">Reference proteome</keyword>
<reference key="1">
    <citation type="journal article" date="1993" name="Virus Res.">
        <title>Nucleotide sequence analysis of variola virus HindIII M, L, I genome fragments.</title>
        <authorList>
            <person name="Shchelkunov S.N."/>
            <person name="Blinov V.M."/>
            <person name="Totmenin A.V."/>
            <person name="Marennikova S.S."/>
            <person name="Kolykhalov A.A."/>
            <person name="Frolov I.V."/>
            <person name="Chizhikov V.E."/>
            <person name="Gytorov V.V."/>
            <person name="Gashikov P.V."/>
            <person name="Belanov E.F."/>
            <person name="Belavin P.A."/>
            <person name="Resenchuk S.M."/>
            <person name="Andzhaparidze O.G."/>
            <person name="Sandakhchiev L.S."/>
        </authorList>
    </citation>
    <scope>NUCLEOTIDE SEQUENCE [GENOMIC DNA]</scope>
</reference>
<reference key="2">
    <citation type="journal article" date="1993" name="FEBS Lett.">
        <title>Genes of variola and vaccinia viruses necessary to overcome the host protective mechanisms.</title>
        <authorList>
            <person name="Shchelkunov S.N."/>
            <person name="Blinov V.M."/>
            <person name="Sandakhchiev L.S."/>
        </authorList>
    </citation>
    <scope>NUCLEOTIDE SEQUENCE [LARGE SCALE GENOMIC DNA]</scope>
</reference>
<organism>
    <name type="scientific">Variola virus (isolate Human/India/Ind3/1967)</name>
    <name type="common">VARV</name>
    <name type="synonym">Smallpox virus</name>
    <dbReference type="NCBI Taxonomy" id="587200"/>
    <lineage>
        <taxon>Viruses</taxon>
        <taxon>Varidnaviria</taxon>
        <taxon>Bamfordvirae</taxon>
        <taxon>Nucleocytoviricota</taxon>
        <taxon>Pokkesviricetes</taxon>
        <taxon>Chitovirales</taxon>
        <taxon>Poxviridae</taxon>
        <taxon>Chordopoxvirinae</taxon>
        <taxon>Orthopoxvirus</taxon>
        <taxon>Variola virus</taxon>
    </lineage>
</organism>
<sequence>MDAVIRGNDVIFVLKTIGVPSVCRQNEDPRFVEAFKCDELERYIKNNPECTLFESLRDEEAYSIVRIFMDVDLDACLDEIDYLTAIQDFIIEVSNCVARFAFTECGAIHENVIKSMRSNFSLTKSTNRDKTSFHIIFLDTYTTMDTLIAMKRTLLELSRSSENPLTRSIDTAVYRKKTTLRVVGTRKNPNCDTIHVMQPPHDNIEDYLFTYVDMNNNSYYFSLQRRLEDLVPDKLWEPGFISFEDAIKRVSKIFINSIINFNDLDENNFTTVPLVIDYVTPCALCKKRSHKHPHQLSLENDAIRIYKTGNPHSCKVKIVPLDGNKLFNIAQRILDTNSVLLTERGDHIVWINNSWKFNSEEPLITKLILSIRHQLPKEYSSELLCPRKRKTVEANIRDMLVDSVETDTYPDKLPFKNGVLDLVDGMFYSGDDAKKYTCTVSTGFKFDDTKFVEDSPEMEELINIINDIQPLTDENKKNRELYEKTLSSCLCGATKGCLTFFFGETATGKSTTKRLLKSAISDLFVETGQTILTDVLDKGPNPFIANMHLKRSVFCSELPDFACSGTKKIRSDNIKKLTEPCVIGRPCFSNKINNRNHATIIIDTNYKPVFDRIDNALMRRIAVVRFRTHFSQPSGREAAENNDAYDKVKLLDEGLDGKIQNNRYRFAFLYLLVKWYRKYHVPIMKLYPTPEEIPDFAFYLKIGTLLVSSSVKHIPLMTDLSKKGYILHDNVVTLPLTTFQQKISKYFNSRLFGHDIESFINRHKKFANVSDEYLQYIFIEDISSP</sequence>
<proteinExistence type="inferred from homology"/>
<organismHost>
    <name type="scientific">Homo sapiens</name>
    <name type="common">Human</name>
    <dbReference type="NCBI Taxonomy" id="9606"/>
</organismHost>
<feature type="chain" id="PRO_0000099441" description="Uncoating factor OPG117">
    <location>
        <begin position="1"/>
        <end position="785"/>
    </location>
</feature>
<feature type="domain" description="SF3 helicase" evidence="4">
    <location>
        <begin position="477"/>
        <end position="639"/>
    </location>
</feature>
<feature type="region of interest" description="Primase" evidence="1">
    <location>
        <begin position="342"/>
        <end position="469"/>
    </location>
</feature>
<feature type="active site" evidence="3">
    <location>
        <position position="170"/>
    </location>
</feature>
<feature type="binding site" evidence="4">
    <location>
        <begin position="503"/>
        <end position="510"/>
    </location>
    <ligand>
        <name>ATP</name>
        <dbReference type="ChEBI" id="CHEBI:30616"/>
    </ligand>
</feature>
<accession>P0DST7</accession>
<accession>P33069</accession>
<comment type="function">
    <text evidence="2">Multifunctional protein required for genome uncoating and replication. Major viral uncoating protein that is required for the release of the viral genome from incoming viral cores containing the viral DNA genome. Possesses an ATPase activity that is required for hexamerization and uncoating.</text>
</comment>
<comment type="subunit">
    <text evidence="2">Homomultimer; hexamer. Interacts with OPG148.</text>
</comment>
<comment type="subcellular location">
    <subcellularLocation>
        <location evidence="2">Host cytoplasm</location>
    </subcellularLocation>
    <text evidence="2">Colocalizes with free cytoplasmic cores containing the viral DNA genome.</text>
</comment>
<comment type="similarity">
    <text evidence="5">Belongs to the orthopoxvirus OPG117 family.</text>
</comment>
<name>PG117_VAR67</name>
<protein>
    <recommendedName>
        <fullName>Uncoating factor OPG117</fullName>
        <ecNumber evidence="2">3.6.4.-</ecNumber>
    </recommendedName>
</protein>
<evidence type="ECO:0000250" key="1"/>
<evidence type="ECO:0000250" key="2">
    <source>
        <dbReference type="UniProtKB" id="P04305"/>
    </source>
</evidence>
<evidence type="ECO:0000255" key="3"/>
<evidence type="ECO:0000255" key="4">
    <source>
        <dbReference type="PROSITE-ProRule" id="PRU00551"/>
    </source>
</evidence>
<evidence type="ECO:0000305" key="5"/>
<gene>
    <name type="primary">OPG117</name>
    <name type="ORF">D5R</name>
    <name type="ORF">F5R</name>
</gene>